<protein>
    <recommendedName>
        <fullName evidence="1">Polyribonucleotide nucleotidyltransferase</fullName>
        <ecNumber evidence="1">2.7.7.8</ecNumber>
    </recommendedName>
    <alternativeName>
        <fullName evidence="1">Polynucleotide phosphorylase</fullName>
        <shortName evidence="1">PNPase</shortName>
    </alternativeName>
</protein>
<name>PNP_SYNC1</name>
<comment type="function">
    <text evidence="1">Involved in mRNA degradation. Catalyzes the phosphorolysis of single-stranded polyribonucleotides processively in the 3'- to 5'-direction.</text>
</comment>
<comment type="catalytic activity">
    <reaction evidence="1">
        <text>RNA(n+1) + phosphate = RNA(n) + a ribonucleoside 5'-diphosphate</text>
        <dbReference type="Rhea" id="RHEA:22096"/>
        <dbReference type="Rhea" id="RHEA-COMP:14527"/>
        <dbReference type="Rhea" id="RHEA-COMP:17342"/>
        <dbReference type="ChEBI" id="CHEBI:43474"/>
        <dbReference type="ChEBI" id="CHEBI:57930"/>
        <dbReference type="ChEBI" id="CHEBI:140395"/>
        <dbReference type="EC" id="2.7.7.8"/>
    </reaction>
</comment>
<comment type="cofactor">
    <cofactor evidence="1">
        <name>Mg(2+)</name>
        <dbReference type="ChEBI" id="CHEBI:18420"/>
    </cofactor>
</comment>
<comment type="subcellular location">
    <subcellularLocation>
        <location evidence="1">Cytoplasm</location>
    </subcellularLocation>
</comment>
<comment type="similarity">
    <text evidence="1">Belongs to the polyribonucleotide nucleotidyltransferase family.</text>
</comment>
<keyword id="KW-0963">Cytoplasm</keyword>
<keyword id="KW-0460">Magnesium</keyword>
<keyword id="KW-0479">Metal-binding</keyword>
<keyword id="KW-0548">Nucleotidyltransferase</keyword>
<keyword id="KW-1185">Reference proteome</keyword>
<keyword id="KW-0694">RNA-binding</keyword>
<keyword id="KW-0808">Transferase</keyword>
<organism>
    <name type="scientific">Syntrophotalea carbinolica (strain DSM 2380 / NBRC 103641 / GraBd1)</name>
    <name type="common">Pelobacter carbinolicus</name>
    <dbReference type="NCBI Taxonomy" id="338963"/>
    <lineage>
        <taxon>Bacteria</taxon>
        <taxon>Pseudomonadati</taxon>
        <taxon>Thermodesulfobacteriota</taxon>
        <taxon>Desulfuromonadia</taxon>
        <taxon>Desulfuromonadales</taxon>
        <taxon>Syntrophotaleaceae</taxon>
        <taxon>Syntrophotalea</taxon>
    </lineage>
</organism>
<dbReference type="EC" id="2.7.7.8" evidence="1"/>
<dbReference type="EMBL" id="CP000142">
    <property type="protein sequence ID" value="ABA88806.1"/>
    <property type="molecule type" value="Genomic_DNA"/>
</dbReference>
<dbReference type="RefSeq" id="WP_011341289.1">
    <property type="nucleotide sequence ID" value="NC_007498.2"/>
</dbReference>
<dbReference type="SMR" id="Q3A4A1"/>
<dbReference type="STRING" id="338963.Pcar_1561"/>
<dbReference type="KEGG" id="pca:Pcar_1561"/>
<dbReference type="eggNOG" id="COG1185">
    <property type="taxonomic scope" value="Bacteria"/>
</dbReference>
<dbReference type="HOGENOM" id="CLU_004217_2_2_7"/>
<dbReference type="OrthoDB" id="9804305at2"/>
<dbReference type="Proteomes" id="UP000002534">
    <property type="component" value="Chromosome"/>
</dbReference>
<dbReference type="GO" id="GO:0005829">
    <property type="term" value="C:cytosol"/>
    <property type="evidence" value="ECO:0007669"/>
    <property type="project" value="TreeGrafter"/>
</dbReference>
<dbReference type="GO" id="GO:0000175">
    <property type="term" value="F:3'-5'-RNA exonuclease activity"/>
    <property type="evidence" value="ECO:0007669"/>
    <property type="project" value="TreeGrafter"/>
</dbReference>
<dbReference type="GO" id="GO:0000287">
    <property type="term" value="F:magnesium ion binding"/>
    <property type="evidence" value="ECO:0007669"/>
    <property type="project" value="UniProtKB-UniRule"/>
</dbReference>
<dbReference type="GO" id="GO:0004654">
    <property type="term" value="F:polyribonucleotide nucleotidyltransferase activity"/>
    <property type="evidence" value="ECO:0007669"/>
    <property type="project" value="UniProtKB-UniRule"/>
</dbReference>
<dbReference type="GO" id="GO:0003723">
    <property type="term" value="F:RNA binding"/>
    <property type="evidence" value="ECO:0007669"/>
    <property type="project" value="UniProtKB-UniRule"/>
</dbReference>
<dbReference type="GO" id="GO:0006402">
    <property type="term" value="P:mRNA catabolic process"/>
    <property type="evidence" value="ECO:0007669"/>
    <property type="project" value="UniProtKB-UniRule"/>
</dbReference>
<dbReference type="GO" id="GO:0006396">
    <property type="term" value="P:RNA processing"/>
    <property type="evidence" value="ECO:0007669"/>
    <property type="project" value="InterPro"/>
</dbReference>
<dbReference type="CDD" id="cd02393">
    <property type="entry name" value="KH-I_PNPase"/>
    <property type="match status" value="1"/>
</dbReference>
<dbReference type="CDD" id="cd11363">
    <property type="entry name" value="RNase_PH_PNPase_1"/>
    <property type="match status" value="1"/>
</dbReference>
<dbReference type="CDD" id="cd11364">
    <property type="entry name" value="RNase_PH_PNPase_2"/>
    <property type="match status" value="1"/>
</dbReference>
<dbReference type="CDD" id="cd04472">
    <property type="entry name" value="S1_PNPase"/>
    <property type="match status" value="1"/>
</dbReference>
<dbReference type="FunFam" id="2.40.50.140:FF:000023">
    <property type="entry name" value="Polyribonucleotide nucleotidyltransferase"/>
    <property type="match status" value="1"/>
</dbReference>
<dbReference type="FunFam" id="3.30.1370.10:FF:000001">
    <property type="entry name" value="Polyribonucleotide nucleotidyltransferase"/>
    <property type="match status" value="1"/>
</dbReference>
<dbReference type="FunFam" id="3.30.230.70:FF:000001">
    <property type="entry name" value="Polyribonucleotide nucleotidyltransferase"/>
    <property type="match status" value="1"/>
</dbReference>
<dbReference type="FunFam" id="3.30.230.70:FF:000002">
    <property type="entry name" value="Polyribonucleotide nucleotidyltransferase"/>
    <property type="match status" value="1"/>
</dbReference>
<dbReference type="Gene3D" id="3.30.230.70">
    <property type="entry name" value="GHMP Kinase, N-terminal domain"/>
    <property type="match status" value="2"/>
</dbReference>
<dbReference type="Gene3D" id="3.30.1370.10">
    <property type="entry name" value="K Homology domain, type 1"/>
    <property type="match status" value="1"/>
</dbReference>
<dbReference type="Gene3D" id="2.40.50.140">
    <property type="entry name" value="Nucleic acid-binding proteins"/>
    <property type="match status" value="1"/>
</dbReference>
<dbReference type="HAMAP" id="MF_01595">
    <property type="entry name" value="PNPase"/>
    <property type="match status" value="1"/>
</dbReference>
<dbReference type="InterPro" id="IPR001247">
    <property type="entry name" value="ExoRNase_PH_dom1"/>
</dbReference>
<dbReference type="InterPro" id="IPR015847">
    <property type="entry name" value="ExoRNase_PH_dom2"/>
</dbReference>
<dbReference type="InterPro" id="IPR036345">
    <property type="entry name" value="ExoRNase_PH_dom2_sf"/>
</dbReference>
<dbReference type="InterPro" id="IPR004087">
    <property type="entry name" value="KH_dom"/>
</dbReference>
<dbReference type="InterPro" id="IPR004088">
    <property type="entry name" value="KH_dom_type_1"/>
</dbReference>
<dbReference type="InterPro" id="IPR036612">
    <property type="entry name" value="KH_dom_type_1_sf"/>
</dbReference>
<dbReference type="InterPro" id="IPR012340">
    <property type="entry name" value="NA-bd_OB-fold"/>
</dbReference>
<dbReference type="InterPro" id="IPR012162">
    <property type="entry name" value="PNPase"/>
</dbReference>
<dbReference type="InterPro" id="IPR027408">
    <property type="entry name" value="PNPase/RNase_PH_dom_sf"/>
</dbReference>
<dbReference type="InterPro" id="IPR015848">
    <property type="entry name" value="PNPase_PH_RNA-bd_bac/org-type"/>
</dbReference>
<dbReference type="InterPro" id="IPR036456">
    <property type="entry name" value="PNPase_PH_RNA-bd_sf"/>
</dbReference>
<dbReference type="InterPro" id="IPR020568">
    <property type="entry name" value="Ribosomal_Su5_D2-typ_SF"/>
</dbReference>
<dbReference type="InterPro" id="IPR003029">
    <property type="entry name" value="S1_domain"/>
</dbReference>
<dbReference type="NCBIfam" id="TIGR03591">
    <property type="entry name" value="polynuc_phos"/>
    <property type="match status" value="1"/>
</dbReference>
<dbReference type="NCBIfam" id="NF008805">
    <property type="entry name" value="PRK11824.1"/>
    <property type="match status" value="1"/>
</dbReference>
<dbReference type="PANTHER" id="PTHR11252">
    <property type="entry name" value="POLYRIBONUCLEOTIDE NUCLEOTIDYLTRANSFERASE"/>
    <property type="match status" value="1"/>
</dbReference>
<dbReference type="PANTHER" id="PTHR11252:SF0">
    <property type="entry name" value="POLYRIBONUCLEOTIDE NUCLEOTIDYLTRANSFERASE 1, MITOCHONDRIAL"/>
    <property type="match status" value="1"/>
</dbReference>
<dbReference type="Pfam" id="PF00013">
    <property type="entry name" value="KH_1"/>
    <property type="match status" value="1"/>
</dbReference>
<dbReference type="Pfam" id="PF03726">
    <property type="entry name" value="PNPase"/>
    <property type="match status" value="1"/>
</dbReference>
<dbReference type="Pfam" id="PF01138">
    <property type="entry name" value="RNase_PH"/>
    <property type="match status" value="2"/>
</dbReference>
<dbReference type="Pfam" id="PF03725">
    <property type="entry name" value="RNase_PH_C"/>
    <property type="match status" value="2"/>
</dbReference>
<dbReference type="Pfam" id="PF00575">
    <property type="entry name" value="S1"/>
    <property type="match status" value="1"/>
</dbReference>
<dbReference type="PIRSF" id="PIRSF005499">
    <property type="entry name" value="PNPase"/>
    <property type="match status" value="1"/>
</dbReference>
<dbReference type="SMART" id="SM00322">
    <property type="entry name" value="KH"/>
    <property type="match status" value="1"/>
</dbReference>
<dbReference type="SMART" id="SM00316">
    <property type="entry name" value="S1"/>
    <property type="match status" value="1"/>
</dbReference>
<dbReference type="SUPFAM" id="SSF54791">
    <property type="entry name" value="Eukaryotic type KH-domain (KH-domain type I)"/>
    <property type="match status" value="1"/>
</dbReference>
<dbReference type="SUPFAM" id="SSF50249">
    <property type="entry name" value="Nucleic acid-binding proteins"/>
    <property type="match status" value="1"/>
</dbReference>
<dbReference type="SUPFAM" id="SSF46915">
    <property type="entry name" value="Polynucleotide phosphorylase/guanosine pentaphosphate synthase (PNPase/GPSI), domain 3"/>
    <property type="match status" value="1"/>
</dbReference>
<dbReference type="SUPFAM" id="SSF55666">
    <property type="entry name" value="Ribonuclease PH domain 2-like"/>
    <property type="match status" value="2"/>
</dbReference>
<dbReference type="SUPFAM" id="SSF54211">
    <property type="entry name" value="Ribosomal protein S5 domain 2-like"/>
    <property type="match status" value="2"/>
</dbReference>
<dbReference type="PROSITE" id="PS50084">
    <property type="entry name" value="KH_TYPE_1"/>
    <property type="match status" value="1"/>
</dbReference>
<dbReference type="PROSITE" id="PS50126">
    <property type="entry name" value="S1"/>
    <property type="match status" value="1"/>
</dbReference>
<proteinExistence type="inferred from homology"/>
<sequence>MAYQKVECQFNGQTLTLETGKMARQADGAVVVSFGGTKVLCTAVSAKQMREGQSFFPLTVNYQEKFYAGGKIPGSFFRRERGATERETLVCRLIDRPLRPLFPKGYMFETQIMPTVISVDEQNDPDTLAMVGASAAIAVSDIPFDGPVAAVRVGRVEGNLIANPTIEQRAESDMDIIVSGSRDAIIMVEGETRFISEQEMLDALFFAHEAIQPLIDVQLELVKIAGKEKREFSVPEIDPAVVEKVAELAETRLSEAVKIRTKQDRYAAVAEIKTEILETLAADFEDQEDDISEAFGNLQKRLVRQMVARDKVRIDGRDKNTIRPITCEIGLLPRAHGSALFTRGETQALVAAALGTSKDEQRMDNVQSMEFKKFMLHYNFPPFCVGETSMRLFPGRREIGHGMLAERSIAQVLPNHDDFPYTLRVVSDILESNGSSSMASVCGASLALMDAGVPVSEAVAGIAMGLIKEGDDIVVLSDILGDEDHLGDMDFKVTGTREGITALQMDIKIKGVSKEIMQQALEQAREGRLHILDKMAEAITAPRSDLSPYAPRITTIQVKPDQVRTVIGPGGKNVRGIIEATGCAIDIEDDGRINIASADGDACKAAIKMIRNLTQEAVVGKLYMATVKKIMEFGAFVEIFPGTEGLVHISELAKERVKKVTDILQEGDQVLVKCLDIDRQGKIKLSRKEALGQSLPEEG</sequence>
<feature type="chain" id="PRO_0000329752" description="Polyribonucleotide nucleotidyltransferase">
    <location>
        <begin position="1"/>
        <end position="699"/>
    </location>
</feature>
<feature type="domain" description="KH" evidence="1">
    <location>
        <begin position="551"/>
        <end position="610"/>
    </location>
</feature>
<feature type="domain" description="S1 motif" evidence="1">
    <location>
        <begin position="620"/>
        <end position="688"/>
    </location>
</feature>
<feature type="binding site" evidence="1">
    <location>
        <position position="484"/>
    </location>
    <ligand>
        <name>Mg(2+)</name>
        <dbReference type="ChEBI" id="CHEBI:18420"/>
    </ligand>
</feature>
<feature type="binding site" evidence="1">
    <location>
        <position position="490"/>
    </location>
    <ligand>
        <name>Mg(2+)</name>
        <dbReference type="ChEBI" id="CHEBI:18420"/>
    </ligand>
</feature>
<accession>Q3A4A1</accession>
<gene>
    <name evidence="1" type="primary">pnp</name>
    <name type="ordered locus">Pcar_1561</name>
</gene>
<evidence type="ECO:0000255" key="1">
    <source>
        <dbReference type="HAMAP-Rule" id="MF_01595"/>
    </source>
</evidence>
<reference key="1">
    <citation type="submission" date="2005-10" db="EMBL/GenBank/DDBJ databases">
        <title>Complete sequence of Pelobacter carbinolicus DSM 2380.</title>
        <authorList>
            <person name="Copeland A."/>
            <person name="Lucas S."/>
            <person name="Lapidus A."/>
            <person name="Barry K."/>
            <person name="Detter J.C."/>
            <person name="Glavina T."/>
            <person name="Hammon N."/>
            <person name="Israni S."/>
            <person name="Pitluck S."/>
            <person name="Chertkov O."/>
            <person name="Schmutz J."/>
            <person name="Larimer F."/>
            <person name="Land M."/>
            <person name="Kyrpides N."/>
            <person name="Ivanova N."/>
            <person name="Richardson P."/>
        </authorList>
    </citation>
    <scope>NUCLEOTIDE SEQUENCE [LARGE SCALE GENOMIC DNA]</scope>
    <source>
        <strain>DSM 2380 / NBRC 103641 / GraBd1</strain>
    </source>
</reference>